<dbReference type="EC" id="4.2.1.11" evidence="1"/>
<dbReference type="EMBL" id="CP000743">
    <property type="protein sequence ID" value="ABR56194.1"/>
    <property type="status" value="ALT_INIT"/>
    <property type="molecule type" value="Genomic_DNA"/>
</dbReference>
<dbReference type="SMR" id="A6UUM2"/>
<dbReference type="STRING" id="419665.Maeo_0609"/>
<dbReference type="KEGG" id="mae:Maeo_0609"/>
<dbReference type="eggNOG" id="arCOG01169">
    <property type="taxonomic scope" value="Archaea"/>
</dbReference>
<dbReference type="HOGENOM" id="CLU_031223_2_1_2"/>
<dbReference type="UniPathway" id="UPA00109">
    <property type="reaction ID" value="UER00187"/>
</dbReference>
<dbReference type="Proteomes" id="UP000001106">
    <property type="component" value="Chromosome"/>
</dbReference>
<dbReference type="GO" id="GO:0009986">
    <property type="term" value="C:cell surface"/>
    <property type="evidence" value="ECO:0007669"/>
    <property type="project" value="UniProtKB-SubCell"/>
</dbReference>
<dbReference type="GO" id="GO:0005576">
    <property type="term" value="C:extracellular region"/>
    <property type="evidence" value="ECO:0007669"/>
    <property type="project" value="UniProtKB-SubCell"/>
</dbReference>
<dbReference type="GO" id="GO:0000015">
    <property type="term" value="C:phosphopyruvate hydratase complex"/>
    <property type="evidence" value="ECO:0007669"/>
    <property type="project" value="InterPro"/>
</dbReference>
<dbReference type="GO" id="GO:0000287">
    <property type="term" value="F:magnesium ion binding"/>
    <property type="evidence" value="ECO:0007669"/>
    <property type="project" value="UniProtKB-UniRule"/>
</dbReference>
<dbReference type="GO" id="GO:0004634">
    <property type="term" value="F:phosphopyruvate hydratase activity"/>
    <property type="evidence" value="ECO:0007669"/>
    <property type="project" value="UniProtKB-UniRule"/>
</dbReference>
<dbReference type="GO" id="GO:0006096">
    <property type="term" value="P:glycolytic process"/>
    <property type="evidence" value="ECO:0007669"/>
    <property type="project" value="UniProtKB-UniRule"/>
</dbReference>
<dbReference type="CDD" id="cd03313">
    <property type="entry name" value="enolase"/>
    <property type="match status" value="1"/>
</dbReference>
<dbReference type="FunFam" id="3.30.390.10:FF:000001">
    <property type="entry name" value="Enolase"/>
    <property type="match status" value="1"/>
</dbReference>
<dbReference type="Gene3D" id="3.20.20.120">
    <property type="entry name" value="Enolase-like C-terminal domain"/>
    <property type="match status" value="1"/>
</dbReference>
<dbReference type="Gene3D" id="3.30.390.10">
    <property type="entry name" value="Enolase-like, N-terminal domain"/>
    <property type="match status" value="1"/>
</dbReference>
<dbReference type="HAMAP" id="MF_00318">
    <property type="entry name" value="Enolase"/>
    <property type="match status" value="1"/>
</dbReference>
<dbReference type="InterPro" id="IPR000941">
    <property type="entry name" value="Enolase"/>
</dbReference>
<dbReference type="InterPro" id="IPR036849">
    <property type="entry name" value="Enolase-like_C_sf"/>
</dbReference>
<dbReference type="InterPro" id="IPR029017">
    <property type="entry name" value="Enolase-like_N"/>
</dbReference>
<dbReference type="InterPro" id="IPR020810">
    <property type="entry name" value="Enolase_C"/>
</dbReference>
<dbReference type="InterPro" id="IPR020809">
    <property type="entry name" value="Enolase_CS"/>
</dbReference>
<dbReference type="InterPro" id="IPR020811">
    <property type="entry name" value="Enolase_N"/>
</dbReference>
<dbReference type="NCBIfam" id="TIGR01060">
    <property type="entry name" value="eno"/>
    <property type="match status" value="1"/>
</dbReference>
<dbReference type="PANTHER" id="PTHR11902">
    <property type="entry name" value="ENOLASE"/>
    <property type="match status" value="1"/>
</dbReference>
<dbReference type="PANTHER" id="PTHR11902:SF1">
    <property type="entry name" value="ENOLASE"/>
    <property type="match status" value="1"/>
</dbReference>
<dbReference type="Pfam" id="PF00113">
    <property type="entry name" value="Enolase_C"/>
    <property type="match status" value="1"/>
</dbReference>
<dbReference type="Pfam" id="PF03952">
    <property type="entry name" value="Enolase_N"/>
    <property type="match status" value="1"/>
</dbReference>
<dbReference type="PIRSF" id="PIRSF001400">
    <property type="entry name" value="Enolase"/>
    <property type="match status" value="1"/>
</dbReference>
<dbReference type="PRINTS" id="PR00148">
    <property type="entry name" value="ENOLASE"/>
</dbReference>
<dbReference type="SFLD" id="SFLDS00001">
    <property type="entry name" value="Enolase"/>
    <property type="match status" value="1"/>
</dbReference>
<dbReference type="SFLD" id="SFLDF00002">
    <property type="entry name" value="enolase"/>
    <property type="match status" value="1"/>
</dbReference>
<dbReference type="SMART" id="SM01192">
    <property type="entry name" value="Enolase_C"/>
    <property type="match status" value="1"/>
</dbReference>
<dbReference type="SMART" id="SM01193">
    <property type="entry name" value="Enolase_N"/>
    <property type="match status" value="1"/>
</dbReference>
<dbReference type="SUPFAM" id="SSF51604">
    <property type="entry name" value="Enolase C-terminal domain-like"/>
    <property type="match status" value="1"/>
</dbReference>
<dbReference type="SUPFAM" id="SSF54826">
    <property type="entry name" value="Enolase N-terminal domain-like"/>
    <property type="match status" value="1"/>
</dbReference>
<dbReference type="PROSITE" id="PS00164">
    <property type="entry name" value="ENOLASE"/>
    <property type="match status" value="1"/>
</dbReference>
<organism>
    <name type="scientific">Methanococcus aeolicus (strain ATCC BAA-1280 / DSM 17508 / OCM 812 / Nankai-3)</name>
    <dbReference type="NCBI Taxonomy" id="419665"/>
    <lineage>
        <taxon>Archaea</taxon>
        <taxon>Methanobacteriati</taxon>
        <taxon>Methanobacteriota</taxon>
        <taxon>Methanomada group</taxon>
        <taxon>Methanococci</taxon>
        <taxon>Methanococcales</taxon>
        <taxon>Methanococcaceae</taxon>
        <taxon>Methanococcus</taxon>
    </lineage>
</organism>
<comment type="function">
    <text evidence="1">Catalyzes the reversible conversion of 2-phosphoglycerate (2-PG) into phosphoenolpyruvate (PEP). It is essential for the degradation of carbohydrates via glycolysis.</text>
</comment>
<comment type="catalytic activity">
    <reaction evidence="1">
        <text>(2R)-2-phosphoglycerate = phosphoenolpyruvate + H2O</text>
        <dbReference type="Rhea" id="RHEA:10164"/>
        <dbReference type="ChEBI" id="CHEBI:15377"/>
        <dbReference type="ChEBI" id="CHEBI:58289"/>
        <dbReference type="ChEBI" id="CHEBI:58702"/>
        <dbReference type="EC" id="4.2.1.11"/>
    </reaction>
</comment>
<comment type="cofactor">
    <cofactor evidence="1">
        <name>Mg(2+)</name>
        <dbReference type="ChEBI" id="CHEBI:18420"/>
    </cofactor>
    <text evidence="1">Binds a second Mg(2+) ion via substrate during catalysis.</text>
</comment>
<comment type="pathway">
    <text evidence="1">Carbohydrate degradation; glycolysis; pyruvate from D-glyceraldehyde 3-phosphate: step 4/5.</text>
</comment>
<comment type="subcellular location">
    <subcellularLocation>
        <location evidence="1">Cytoplasm</location>
    </subcellularLocation>
    <subcellularLocation>
        <location evidence="1">Secreted</location>
    </subcellularLocation>
    <subcellularLocation>
        <location evidence="1">Cell surface</location>
    </subcellularLocation>
    <text evidence="1">Fractions of enolase are present in both the cytoplasm and on the cell surface.</text>
</comment>
<comment type="similarity">
    <text evidence="1">Belongs to the enolase family.</text>
</comment>
<comment type="sequence caution" evidence="2">
    <conflict type="erroneous initiation">
        <sequence resource="EMBL-CDS" id="ABR56194"/>
    </conflict>
    <text>Extended N-terminus.</text>
</comment>
<sequence>MDNSFDILDIKAREVIDSRGNPTVEVEVLTAGGYGSAIVPSGASTGTHEAVELRDKSQRFGGKGVLVAVDNVNSIIAPELIGFDSRTQREIDTYMIELDRTANKGKLGANAILAVSMAVAKAAASTASLPLYKYIGGCNSYIMPVPMMNVINGGEHAGNALEFQEFMIMPVGADSISEAIRMCAETYHTLKKVIVSKYGKNASNVGDEGGFAPPVSDIRETLDLLTDAVKMAGYEDEITFALDCAASEFYNKDDNKYIVKGAPLSSDQLISLYKEICDEYPVISIEDPLDEEDFEGFASLTKELKGVQIVGDDLFVTNTERLKKGIEMGAGNALLLKVNQIGTLSESIDAANLAFRNGYGVVVSHRSGESEDNTIADISVALNAGQIKTGAPARGERTAKYNQLIRIEEEIGYPKYAGKNIRCPF</sequence>
<proteinExistence type="inferred from homology"/>
<keyword id="KW-0963">Cytoplasm</keyword>
<keyword id="KW-0324">Glycolysis</keyword>
<keyword id="KW-0456">Lyase</keyword>
<keyword id="KW-0460">Magnesium</keyword>
<keyword id="KW-0479">Metal-binding</keyword>
<keyword id="KW-0964">Secreted</keyword>
<reference key="1">
    <citation type="submission" date="2007-06" db="EMBL/GenBank/DDBJ databases">
        <title>Complete sequence of Methanococcus aeolicus Nankai-3.</title>
        <authorList>
            <consortium name="US DOE Joint Genome Institute"/>
            <person name="Copeland A."/>
            <person name="Lucas S."/>
            <person name="Lapidus A."/>
            <person name="Barry K."/>
            <person name="Glavina del Rio T."/>
            <person name="Dalin E."/>
            <person name="Tice H."/>
            <person name="Pitluck S."/>
            <person name="Chain P."/>
            <person name="Malfatti S."/>
            <person name="Shin M."/>
            <person name="Vergez L."/>
            <person name="Schmutz J."/>
            <person name="Larimer F."/>
            <person name="Land M."/>
            <person name="Hauser L."/>
            <person name="Kyrpides N."/>
            <person name="Lykidis A."/>
            <person name="Sieprawska-Lupa M."/>
            <person name="Whitman W.B."/>
            <person name="Richardson P."/>
        </authorList>
    </citation>
    <scope>NUCLEOTIDE SEQUENCE [LARGE SCALE GENOMIC DNA]</scope>
    <source>
        <strain>ATCC BAA-1280 / DSM 17508 / OCM 812 / Nankai-3</strain>
    </source>
</reference>
<name>ENO_META3</name>
<gene>
    <name evidence="1" type="primary">eno</name>
    <name type="ordered locus">Maeo_0609</name>
</gene>
<evidence type="ECO:0000255" key="1">
    <source>
        <dbReference type="HAMAP-Rule" id="MF_00318"/>
    </source>
</evidence>
<evidence type="ECO:0000305" key="2"/>
<accession>A6UUM2</accession>
<feature type="chain" id="PRO_0000337622" description="Enolase">
    <location>
        <begin position="1"/>
        <end position="425"/>
    </location>
</feature>
<feature type="active site" description="Proton donor" evidence="1">
    <location>
        <position position="208"/>
    </location>
</feature>
<feature type="active site" description="Proton acceptor" evidence="1">
    <location>
        <position position="337"/>
    </location>
</feature>
<feature type="binding site" evidence="1">
    <location>
        <position position="164"/>
    </location>
    <ligand>
        <name>(2R)-2-phosphoglycerate</name>
        <dbReference type="ChEBI" id="CHEBI:58289"/>
    </ligand>
</feature>
<feature type="binding site" evidence="1">
    <location>
        <position position="243"/>
    </location>
    <ligand>
        <name>Mg(2+)</name>
        <dbReference type="ChEBI" id="CHEBI:18420"/>
    </ligand>
</feature>
<feature type="binding site" evidence="1">
    <location>
        <position position="286"/>
    </location>
    <ligand>
        <name>Mg(2+)</name>
        <dbReference type="ChEBI" id="CHEBI:18420"/>
    </ligand>
</feature>
<feature type="binding site" evidence="1">
    <location>
        <position position="312"/>
    </location>
    <ligand>
        <name>Mg(2+)</name>
        <dbReference type="ChEBI" id="CHEBI:18420"/>
    </ligand>
</feature>
<feature type="binding site" evidence="1">
    <location>
        <position position="337"/>
    </location>
    <ligand>
        <name>(2R)-2-phosphoglycerate</name>
        <dbReference type="ChEBI" id="CHEBI:58289"/>
    </ligand>
</feature>
<feature type="binding site" evidence="1">
    <location>
        <position position="366"/>
    </location>
    <ligand>
        <name>(2R)-2-phosphoglycerate</name>
        <dbReference type="ChEBI" id="CHEBI:58289"/>
    </ligand>
</feature>
<feature type="binding site" evidence="1">
    <location>
        <position position="367"/>
    </location>
    <ligand>
        <name>(2R)-2-phosphoglycerate</name>
        <dbReference type="ChEBI" id="CHEBI:58289"/>
    </ligand>
</feature>
<feature type="binding site" evidence="1">
    <location>
        <position position="388"/>
    </location>
    <ligand>
        <name>(2R)-2-phosphoglycerate</name>
        <dbReference type="ChEBI" id="CHEBI:58289"/>
    </ligand>
</feature>
<protein>
    <recommendedName>
        <fullName evidence="1">Enolase</fullName>
        <ecNumber evidence="1">4.2.1.11</ecNumber>
    </recommendedName>
    <alternativeName>
        <fullName evidence="1">2-phospho-D-glycerate hydro-lyase</fullName>
    </alternativeName>
    <alternativeName>
        <fullName evidence="1">2-phosphoglycerate dehydratase</fullName>
    </alternativeName>
</protein>